<keyword id="KW-0378">Hydrolase</keyword>
<keyword id="KW-0460">Magnesium</keyword>
<keyword id="KW-0479">Metal-binding</keyword>
<keyword id="KW-0546">Nucleotide metabolism</keyword>
<keyword id="KW-1185">Reference proteome</keyword>
<organism>
    <name type="scientific">Corynebacterium diphtheriae (strain ATCC 700971 / NCTC 13129 / Biotype gravis)</name>
    <dbReference type="NCBI Taxonomy" id="257309"/>
    <lineage>
        <taxon>Bacteria</taxon>
        <taxon>Bacillati</taxon>
        <taxon>Actinomycetota</taxon>
        <taxon>Actinomycetes</taxon>
        <taxon>Mycobacteriales</taxon>
        <taxon>Corynebacteriaceae</taxon>
        <taxon>Corynebacterium</taxon>
    </lineage>
</organism>
<protein>
    <recommendedName>
        <fullName evidence="1">Deoxyuridine 5'-triphosphate nucleotidohydrolase</fullName>
        <shortName evidence="1">dUTPase</shortName>
        <ecNumber evidence="1">3.6.1.23</ecNumber>
    </recommendedName>
    <alternativeName>
        <fullName evidence="1">dUTP pyrophosphatase</fullName>
    </alternativeName>
</protein>
<reference key="1">
    <citation type="journal article" date="2003" name="Nucleic Acids Res.">
        <title>The complete genome sequence and analysis of Corynebacterium diphtheriae NCTC13129.</title>
        <authorList>
            <person name="Cerdeno-Tarraga A.-M."/>
            <person name="Efstratiou A."/>
            <person name="Dover L.G."/>
            <person name="Holden M.T.G."/>
            <person name="Pallen M.J."/>
            <person name="Bentley S.D."/>
            <person name="Besra G.S."/>
            <person name="Churcher C.M."/>
            <person name="James K.D."/>
            <person name="De Zoysa A."/>
            <person name="Chillingworth T."/>
            <person name="Cronin A."/>
            <person name="Dowd L."/>
            <person name="Feltwell T."/>
            <person name="Hamlin N."/>
            <person name="Holroyd S."/>
            <person name="Jagels K."/>
            <person name="Moule S."/>
            <person name="Quail M.A."/>
            <person name="Rabbinowitsch E."/>
            <person name="Rutherford K.M."/>
            <person name="Thomson N.R."/>
            <person name="Unwin L."/>
            <person name="Whitehead S."/>
            <person name="Barrell B.G."/>
            <person name="Parkhill J."/>
        </authorList>
    </citation>
    <scope>NUCLEOTIDE SEQUENCE [LARGE SCALE GENOMIC DNA]</scope>
    <source>
        <strain>ATCC 700971 / NCTC 13129 / Biotype gravis</strain>
    </source>
</reference>
<evidence type="ECO:0000255" key="1">
    <source>
        <dbReference type="HAMAP-Rule" id="MF_00116"/>
    </source>
</evidence>
<proteinExistence type="inferred from homology"/>
<name>DUT_CORDI</name>
<sequence>MENDQEKPSMVAIQRLDPELPLPVRKHRGDAGADLFSAESVTIEPGHRILVGTGIAIALPIGTVGLIHPRSGRALKEGLSIVNTPGTIDADYRGEIKVCLINLDPTTPIRIERGERIAQLLVQKVELVDFCEVETLSETERGVNGYGSTGVN</sequence>
<accession>P61907</accession>
<feature type="chain" id="PRO_0000182853" description="Deoxyuridine 5'-triphosphate nucleotidohydrolase">
    <location>
        <begin position="1"/>
        <end position="152"/>
    </location>
</feature>
<feature type="binding site" evidence="1">
    <location>
        <begin position="70"/>
        <end position="72"/>
    </location>
    <ligand>
        <name>substrate</name>
    </ligand>
</feature>
<feature type="binding site" evidence="1">
    <location>
        <position position="83"/>
    </location>
    <ligand>
        <name>substrate</name>
    </ligand>
</feature>
<feature type="binding site" evidence="1">
    <location>
        <begin position="87"/>
        <end position="89"/>
    </location>
    <ligand>
        <name>substrate</name>
    </ligand>
</feature>
<feature type="binding site" evidence="1">
    <location>
        <position position="97"/>
    </location>
    <ligand>
        <name>substrate</name>
    </ligand>
</feature>
<gene>
    <name evidence="1" type="primary">dut</name>
    <name type="ordered locus">DIP1400</name>
</gene>
<dbReference type="EC" id="3.6.1.23" evidence="1"/>
<dbReference type="EMBL" id="BX248358">
    <property type="protein sequence ID" value="CAE49931.1"/>
    <property type="molecule type" value="Genomic_DNA"/>
</dbReference>
<dbReference type="RefSeq" id="WP_003851774.1">
    <property type="nucleotide sequence ID" value="NC_002935.2"/>
</dbReference>
<dbReference type="SMR" id="P61907"/>
<dbReference type="STRING" id="257309.DIP1400"/>
<dbReference type="GeneID" id="29421126"/>
<dbReference type="KEGG" id="cdi:DIP1400"/>
<dbReference type="HOGENOM" id="CLU_068508_1_3_11"/>
<dbReference type="UniPathway" id="UPA00610">
    <property type="reaction ID" value="UER00666"/>
</dbReference>
<dbReference type="Proteomes" id="UP000002198">
    <property type="component" value="Chromosome"/>
</dbReference>
<dbReference type="GO" id="GO:0004170">
    <property type="term" value="F:dUTP diphosphatase activity"/>
    <property type="evidence" value="ECO:0007669"/>
    <property type="project" value="UniProtKB-UniRule"/>
</dbReference>
<dbReference type="GO" id="GO:0000287">
    <property type="term" value="F:magnesium ion binding"/>
    <property type="evidence" value="ECO:0007669"/>
    <property type="project" value="UniProtKB-UniRule"/>
</dbReference>
<dbReference type="GO" id="GO:0006226">
    <property type="term" value="P:dUMP biosynthetic process"/>
    <property type="evidence" value="ECO:0007669"/>
    <property type="project" value="UniProtKB-UniRule"/>
</dbReference>
<dbReference type="GO" id="GO:0046081">
    <property type="term" value="P:dUTP catabolic process"/>
    <property type="evidence" value="ECO:0007669"/>
    <property type="project" value="InterPro"/>
</dbReference>
<dbReference type="CDD" id="cd07557">
    <property type="entry name" value="trimeric_dUTPase"/>
    <property type="match status" value="1"/>
</dbReference>
<dbReference type="FunFam" id="2.70.40.10:FF:000008">
    <property type="entry name" value="Deoxyuridine 5'-triphosphate nucleotidohydrolase"/>
    <property type="match status" value="1"/>
</dbReference>
<dbReference type="Gene3D" id="2.70.40.10">
    <property type="match status" value="1"/>
</dbReference>
<dbReference type="HAMAP" id="MF_00116">
    <property type="entry name" value="dUTPase_bact"/>
    <property type="match status" value="1"/>
</dbReference>
<dbReference type="InterPro" id="IPR008181">
    <property type="entry name" value="dUTPase"/>
</dbReference>
<dbReference type="InterPro" id="IPR029054">
    <property type="entry name" value="dUTPase-like"/>
</dbReference>
<dbReference type="InterPro" id="IPR036157">
    <property type="entry name" value="dUTPase-like_sf"/>
</dbReference>
<dbReference type="InterPro" id="IPR033704">
    <property type="entry name" value="dUTPase_trimeric"/>
</dbReference>
<dbReference type="NCBIfam" id="TIGR00576">
    <property type="entry name" value="dut"/>
    <property type="match status" value="1"/>
</dbReference>
<dbReference type="NCBIfam" id="NF001862">
    <property type="entry name" value="PRK00601.1"/>
    <property type="match status" value="1"/>
</dbReference>
<dbReference type="PANTHER" id="PTHR11241">
    <property type="entry name" value="DEOXYURIDINE 5'-TRIPHOSPHATE NUCLEOTIDOHYDROLASE"/>
    <property type="match status" value="1"/>
</dbReference>
<dbReference type="PANTHER" id="PTHR11241:SF0">
    <property type="entry name" value="DEOXYURIDINE 5'-TRIPHOSPHATE NUCLEOTIDOHYDROLASE"/>
    <property type="match status" value="1"/>
</dbReference>
<dbReference type="Pfam" id="PF00692">
    <property type="entry name" value="dUTPase"/>
    <property type="match status" value="1"/>
</dbReference>
<dbReference type="SUPFAM" id="SSF51283">
    <property type="entry name" value="dUTPase-like"/>
    <property type="match status" value="1"/>
</dbReference>
<comment type="function">
    <text evidence="1">This enzyme is involved in nucleotide metabolism: it produces dUMP, the immediate precursor of thymidine nucleotides and it decreases the intracellular concentration of dUTP so that uracil cannot be incorporated into DNA.</text>
</comment>
<comment type="catalytic activity">
    <reaction evidence="1">
        <text>dUTP + H2O = dUMP + diphosphate + H(+)</text>
        <dbReference type="Rhea" id="RHEA:10248"/>
        <dbReference type="ChEBI" id="CHEBI:15377"/>
        <dbReference type="ChEBI" id="CHEBI:15378"/>
        <dbReference type="ChEBI" id="CHEBI:33019"/>
        <dbReference type="ChEBI" id="CHEBI:61555"/>
        <dbReference type="ChEBI" id="CHEBI:246422"/>
        <dbReference type="EC" id="3.6.1.23"/>
    </reaction>
</comment>
<comment type="cofactor">
    <cofactor evidence="1">
        <name>Mg(2+)</name>
        <dbReference type="ChEBI" id="CHEBI:18420"/>
    </cofactor>
</comment>
<comment type="pathway">
    <text evidence="1">Pyrimidine metabolism; dUMP biosynthesis; dUMP from dCTP (dUTP route): step 2/2.</text>
</comment>
<comment type="similarity">
    <text evidence="1">Belongs to the dUTPase family.</text>
</comment>